<accession>Q9Z743</accession>
<accession>Q9JS96</accession>
<organism>
    <name type="scientific">Chlamydia pneumoniae</name>
    <name type="common">Chlamydophila pneumoniae</name>
    <dbReference type="NCBI Taxonomy" id="83558"/>
    <lineage>
        <taxon>Bacteria</taxon>
        <taxon>Pseudomonadati</taxon>
        <taxon>Chlamydiota</taxon>
        <taxon>Chlamydiia</taxon>
        <taxon>Chlamydiales</taxon>
        <taxon>Chlamydiaceae</taxon>
        <taxon>Chlamydia/Chlamydophila group</taxon>
        <taxon>Chlamydia</taxon>
    </lineage>
</organism>
<sequence length="228" mass="26246">MALLILLRHGQSVWNEKNLFSGWVDIPLSQQGIEEAFSAGRAIQNLPIDCIFTSTLVRSLMTALLAMTNHHSKKIPYIVHEDPKAKEMSRIYSAEEENNMIPLYQSSALNERMYGELQGKNKKQTAEQFGEERVKLWRRSYKTAPPQGESLYDTKQRTLPYFEKNILPQLQNGKNVFVSAHGNSLRSLIMDLEKLSEEEVLSLELPTGKPVVYQWKNHKIEKHPEFFG</sequence>
<protein>
    <recommendedName>
        <fullName evidence="1">2,3-bisphosphoglycerate-dependent phosphoglycerate mutase</fullName>
        <shortName evidence="1">BPG-dependent PGAM</shortName>
        <shortName evidence="1">PGAM</shortName>
        <shortName evidence="1">Phosphoglyceromutase</shortName>
        <shortName evidence="1">dPGM</shortName>
        <ecNumber evidence="1">5.4.2.11</ecNumber>
    </recommendedName>
</protein>
<gene>
    <name evidence="1" type="primary">gpmA</name>
    <name type="synonym">pgmA</name>
    <name type="ordered locus">CPn_0863</name>
    <name type="ordered locus">CP_1006</name>
    <name type="ordered locus">CpB0892</name>
</gene>
<name>GPMA_CHLPN</name>
<proteinExistence type="inferred from homology"/>
<reference key="1">
    <citation type="journal article" date="1999" name="Nat. Genet.">
        <title>Comparative genomes of Chlamydia pneumoniae and C. trachomatis.</title>
        <authorList>
            <person name="Kalman S."/>
            <person name="Mitchell W.P."/>
            <person name="Marathe R."/>
            <person name="Lammel C.J."/>
            <person name="Fan J."/>
            <person name="Hyman R.W."/>
            <person name="Olinger L."/>
            <person name="Grimwood J."/>
            <person name="Davis R.W."/>
            <person name="Stephens R.S."/>
        </authorList>
    </citation>
    <scope>NUCLEOTIDE SEQUENCE [LARGE SCALE GENOMIC DNA]</scope>
    <source>
        <strain>CWL029</strain>
    </source>
</reference>
<reference key="2">
    <citation type="journal article" date="2000" name="Nucleic Acids Res.">
        <title>Genome sequences of Chlamydia trachomatis MoPn and Chlamydia pneumoniae AR39.</title>
        <authorList>
            <person name="Read T.D."/>
            <person name="Brunham R.C."/>
            <person name="Shen C."/>
            <person name="Gill S.R."/>
            <person name="Heidelberg J.F."/>
            <person name="White O."/>
            <person name="Hickey E.K."/>
            <person name="Peterson J.D."/>
            <person name="Utterback T.R."/>
            <person name="Berry K.J."/>
            <person name="Bass S."/>
            <person name="Linher K.D."/>
            <person name="Weidman J.F."/>
            <person name="Khouri H.M."/>
            <person name="Craven B."/>
            <person name="Bowman C."/>
            <person name="Dodson R.J."/>
            <person name="Gwinn M.L."/>
            <person name="Nelson W.C."/>
            <person name="DeBoy R.T."/>
            <person name="Kolonay J.F."/>
            <person name="McClarty G."/>
            <person name="Salzberg S.L."/>
            <person name="Eisen J.A."/>
            <person name="Fraser C.M."/>
        </authorList>
    </citation>
    <scope>NUCLEOTIDE SEQUENCE [LARGE SCALE GENOMIC DNA]</scope>
    <source>
        <strain>AR39</strain>
    </source>
</reference>
<reference key="3">
    <citation type="journal article" date="2000" name="Nucleic Acids Res.">
        <title>Comparison of whole genome sequences of Chlamydia pneumoniae J138 from Japan and CWL029 from USA.</title>
        <authorList>
            <person name="Shirai M."/>
            <person name="Hirakawa H."/>
            <person name="Kimoto M."/>
            <person name="Tabuchi M."/>
            <person name="Kishi F."/>
            <person name="Ouchi K."/>
            <person name="Shiba T."/>
            <person name="Ishii K."/>
            <person name="Hattori M."/>
            <person name="Kuhara S."/>
            <person name="Nakazawa T."/>
        </authorList>
    </citation>
    <scope>NUCLEOTIDE SEQUENCE [LARGE SCALE GENOMIC DNA]</scope>
    <source>
        <strain>J138</strain>
    </source>
</reference>
<reference key="4">
    <citation type="submission" date="2002-05" db="EMBL/GenBank/DDBJ databases">
        <title>The genome sequence of Chlamydia pneumoniae TW183 and comparison with other Chlamydia strains based on whole genome sequence analysis.</title>
        <authorList>
            <person name="Geng M.M."/>
            <person name="Schuhmacher A."/>
            <person name="Muehldorfer I."/>
            <person name="Bensch K.W."/>
            <person name="Schaefer K.P."/>
            <person name="Schneider S."/>
            <person name="Pohl T."/>
            <person name="Essig A."/>
            <person name="Marre R."/>
            <person name="Melchers K."/>
        </authorList>
    </citation>
    <scope>NUCLEOTIDE SEQUENCE [LARGE SCALE GENOMIC DNA]</scope>
    <source>
        <strain>TW-183</strain>
    </source>
</reference>
<evidence type="ECO:0000255" key="1">
    <source>
        <dbReference type="HAMAP-Rule" id="MF_01039"/>
    </source>
</evidence>
<evidence type="ECO:0000305" key="2"/>
<keyword id="KW-0312">Gluconeogenesis</keyword>
<keyword id="KW-0324">Glycolysis</keyword>
<keyword id="KW-0413">Isomerase</keyword>
<dbReference type="EC" id="5.4.2.11" evidence="1"/>
<dbReference type="EMBL" id="AE001363">
    <property type="protein sequence ID" value="AAD19001.1"/>
    <property type="molecule type" value="Genomic_DNA"/>
</dbReference>
<dbReference type="EMBL" id="AE002161">
    <property type="protein sequence ID" value="AAF38784.1"/>
    <property type="molecule type" value="Genomic_DNA"/>
</dbReference>
<dbReference type="EMBL" id="BA000008">
    <property type="protein sequence ID" value="BAA99071.1"/>
    <property type="molecule type" value="Genomic_DNA"/>
</dbReference>
<dbReference type="EMBL" id="AE009440">
    <property type="protein sequence ID" value="AAP98821.1"/>
    <property type="molecule type" value="Genomic_DNA"/>
</dbReference>
<dbReference type="PIR" id="E86598">
    <property type="entry name" value="E86598"/>
</dbReference>
<dbReference type="PIR" id="G72025">
    <property type="entry name" value="G72025"/>
</dbReference>
<dbReference type="RefSeq" id="NP_225058.1">
    <property type="nucleotide sequence ID" value="NC_000922.1"/>
</dbReference>
<dbReference type="RefSeq" id="WP_010883498.1">
    <property type="nucleotide sequence ID" value="NZ_LN847257.1"/>
</dbReference>
<dbReference type="SMR" id="Q9Z743"/>
<dbReference type="STRING" id="406984.CPK_ORF00269"/>
<dbReference type="GeneID" id="45050916"/>
<dbReference type="KEGG" id="cpa:CP_1006"/>
<dbReference type="KEGG" id="cpj:pgmA"/>
<dbReference type="KEGG" id="cpn:CPn_0863"/>
<dbReference type="KEGG" id="cpt:CpB0892"/>
<dbReference type="PATRIC" id="fig|115713.3.peg.943"/>
<dbReference type="eggNOG" id="COG0588">
    <property type="taxonomic scope" value="Bacteria"/>
</dbReference>
<dbReference type="HOGENOM" id="CLU_033323_1_4_0"/>
<dbReference type="OrthoDB" id="9781415at2"/>
<dbReference type="UniPathway" id="UPA00109">
    <property type="reaction ID" value="UER00186"/>
</dbReference>
<dbReference type="Proteomes" id="UP000000583">
    <property type="component" value="Chromosome"/>
</dbReference>
<dbReference type="Proteomes" id="UP000000801">
    <property type="component" value="Chromosome"/>
</dbReference>
<dbReference type="GO" id="GO:0004619">
    <property type="term" value="F:phosphoglycerate mutase activity"/>
    <property type="evidence" value="ECO:0007669"/>
    <property type="project" value="UniProtKB-EC"/>
</dbReference>
<dbReference type="GO" id="GO:0006094">
    <property type="term" value="P:gluconeogenesis"/>
    <property type="evidence" value="ECO:0007669"/>
    <property type="project" value="UniProtKB-UniRule"/>
</dbReference>
<dbReference type="GO" id="GO:0006096">
    <property type="term" value="P:glycolytic process"/>
    <property type="evidence" value="ECO:0007669"/>
    <property type="project" value="UniProtKB-UniRule"/>
</dbReference>
<dbReference type="CDD" id="cd07067">
    <property type="entry name" value="HP_PGM_like"/>
    <property type="match status" value="1"/>
</dbReference>
<dbReference type="Gene3D" id="3.40.50.1240">
    <property type="entry name" value="Phosphoglycerate mutase-like"/>
    <property type="match status" value="1"/>
</dbReference>
<dbReference type="HAMAP" id="MF_01039">
    <property type="entry name" value="PGAM_GpmA"/>
    <property type="match status" value="1"/>
</dbReference>
<dbReference type="InterPro" id="IPR013078">
    <property type="entry name" value="His_Pase_superF_clade-1"/>
</dbReference>
<dbReference type="InterPro" id="IPR029033">
    <property type="entry name" value="His_PPase_superfam"/>
</dbReference>
<dbReference type="InterPro" id="IPR001345">
    <property type="entry name" value="PG/BPGM_mutase_AS"/>
</dbReference>
<dbReference type="InterPro" id="IPR005952">
    <property type="entry name" value="Phosphogly_mut1"/>
</dbReference>
<dbReference type="NCBIfam" id="TIGR01258">
    <property type="entry name" value="pgm_1"/>
    <property type="match status" value="1"/>
</dbReference>
<dbReference type="NCBIfam" id="NF002217">
    <property type="entry name" value="PRK01112.1"/>
    <property type="match status" value="1"/>
</dbReference>
<dbReference type="PANTHER" id="PTHR11931">
    <property type="entry name" value="PHOSPHOGLYCERATE MUTASE"/>
    <property type="match status" value="1"/>
</dbReference>
<dbReference type="Pfam" id="PF00300">
    <property type="entry name" value="His_Phos_1"/>
    <property type="match status" value="2"/>
</dbReference>
<dbReference type="SMART" id="SM00855">
    <property type="entry name" value="PGAM"/>
    <property type="match status" value="1"/>
</dbReference>
<dbReference type="SUPFAM" id="SSF53254">
    <property type="entry name" value="Phosphoglycerate mutase-like"/>
    <property type="match status" value="1"/>
</dbReference>
<dbReference type="PROSITE" id="PS00175">
    <property type="entry name" value="PG_MUTASE"/>
    <property type="match status" value="1"/>
</dbReference>
<feature type="chain" id="PRO_0000179865" description="2,3-bisphosphoglycerate-dependent phosphoglycerate mutase">
    <location>
        <begin position="1"/>
        <end position="228"/>
    </location>
</feature>
<feature type="active site" description="Tele-phosphohistidine intermediate" evidence="1">
    <location>
        <position position="9"/>
    </location>
</feature>
<feature type="active site" description="Proton donor/acceptor" evidence="1">
    <location>
        <position position="111"/>
    </location>
</feature>
<feature type="binding site" evidence="1">
    <location>
        <begin position="8"/>
        <end position="15"/>
    </location>
    <ligand>
        <name>substrate</name>
    </ligand>
</feature>
<feature type="binding site" evidence="1">
    <location>
        <begin position="21"/>
        <end position="22"/>
    </location>
    <ligand>
        <name>substrate</name>
    </ligand>
</feature>
<feature type="binding site" evidence="1">
    <location>
        <position position="58"/>
    </location>
    <ligand>
        <name>substrate</name>
    </ligand>
</feature>
<feature type="binding site" evidence="1">
    <location>
        <begin position="111"/>
        <end position="114"/>
    </location>
    <ligand>
        <name>substrate</name>
    </ligand>
</feature>
<feature type="binding site" evidence="1">
    <location>
        <position position="122"/>
    </location>
    <ligand>
        <name>substrate</name>
    </ligand>
</feature>
<feature type="binding site" evidence="1">
    <location>
        <begin position="138"/>
        <end position="139"/>
    </location>
    <ligand>
        <name>substrate</name>
    </ligand>
</feature>
<feature type="binding site" evidence="1">
    <location>
        <begin position="182"/>
        <end position="183"/>
    </location>
    <ligand>
        <name>substrate</name>
    </ligand>
</feature>
<feature type="site" description="Transition state stabilizer" evidence="1">
    <location>
        <position position="181"/>
    </location>
</feature>
<feature type="sequence conflict" description="In Ref. 3; BAA99071." evidence="2" ref="3">
    <original>N</original>
    <variation>H</variation>
    <location>
        <position position="172"/>
    </location>
</feature>
<comment type="function">
    <text evidence="1">Catalyzes the interconversion of 2-phosphoglycerate and 3-phosphoglycerate.</text>
</comment>
<comment type="catalytic activity">
    <reaction evidence="1">
        <text>(2R)-2-phosphoglycerate = (2R)-3-phosphoglycerate</text>
        <dbReference type="Rhea" id="RHEA:15901"/>
        <dbReference type="ChEBI" id="CHEBI:58272"/>
        <dbReference type="ChEBI" id="CHEBI:58289"/>
        <dbReference type="EC" id="5.4.2.11"/>
    </reaction>
</comment>
<comment type="pathway">
    <text evidence="1">Carbohydrate degradation; glycolysis; pyruvate from D-glyceraldehyde 3-phosphate: step 3/5.</text>
</comment>
<comment type="similarity">
    <text evidence="1">Belongs to the phosphoglycerate mutase family. BPG-dependent PGAM subfamily.</text>
</comment>